<evidence type="ECO:0000255" key="1"/>
<evidence type="ECO:0000305" key="2"/>
<comment type="cofactor">
    <cofactor evidence="2">
        <name>Mn(2+)</name>
        <dbReference type="ChEBI" id="CHEBI:29035"/>
    </cofactor>
    <text evidence="2">Binds 2 manganese ions per subunit.</text>
</comment>
<comment type="similarity">
    <text evidence="2">Belongs to the peptidase M24B family.</text>
</comment>
<protein>
    <recommendedName>
        <fullName>Uncharacterized peptidase YqhT</fullName>
        <ecNumber>3.4.-.-</ecNumber>
    </recommendedName>
</protein>
<gene>
    <name type="primary">yqhT</name>
    <name type="ordered locus">BSU24460</name>
</gene>
<proteinExistence type="inferred from homology"/>
<organism>
    <name type="scientific">Bacillus subtilis (strain 168)</name>
    <dbReference type="NCBI Taxonomy" id="224308"/>
    <lineage>
        <taxon>Bacteria</taxon>
        <taxon>Bacillati</taxon>
        <taxon>Bacillota</taxon>
        <taxon>Bacilli</taxon>
        <taxon>Bacillales</taxon>
        <taxon>Bacillaceae</taxon>
        <taxon>Bacillus</taxon>
    </lineage>
</organism>
<feature type="chain" id="PRO_0000185101" description="Uncharacterized peptidase YqhT">
    <location>
        <begin position="1"/>
        <end position="353"/>
    </location>
</feature>
<feature type="binding site" evidence="1">
    <location>
        <position position="212"/>
    </location>
    <ligand>
        <name>Mn(2+)</name>
        <dbReference type="ChEBI" id="CHEBI:29035"/>
        <label>2</label>
    </ligand>
</feature>
<feature type="binding site" evidence="1">
    <location>
        <position position="223"/>
    </location>
    <ligand>
        <name>Mn(2+)</name>
        <dbReference type="ChEBI" id="CHEBI:29035"/>
        <label>1</label>
    </ligand>
</feature>
<feature type="binding site" evidence="1">
    <location>
        <position position="223"/>
    </location>
    <ligand>
        <name>Mn(2+)</name>
        <dbReference type="ChEBI" id="CHEBI:29035"/>
        <label>2</label>
    </ligand>
</feature>
<feature type="binding site" evidence="1">
    <location>
        <position position="287"/>
    </location>
    <ligand>
        <name>Mn(2+)</name>
        <dbReference type="ChEBI" id="CHEBI:29035"/>
        <label>1</label>
    </ligand>
</feature>
<feature type="binding site" evidence="1">
    <location>
        <position position="316"/>
    </location>
    <ligand>
        <name>Mn(2+)</name>
        <dbReference type="ChEBI" id="CHEBI:29035"/>
        <label>1</label>
    </ligand>
</feature>
<feature type="binding site" evidence="1">
    <location>
        <position position="330"/>
    </location>
    <ligand>
        <name>Mn(2+)</name>
        <dbReference type="ChEBI" id="CHEBI:29035"/>
        <label>1</label>
    </ligand>
</feature>
<feature type="binding site" evidence="1">
    <location>
        <position position="330"/>
    </location>
    <ligand>
        <name>Mn(2+)</name>
        <dbReference type="ChEBI" id="CHEBI:29035"/>
        <label>2</label>
    </ligand>
</feature>
<accession>P54518</accession>
<name>YQHT_BACSU</name>
<sequence length="353" mass="38120">MKLEKLRNLFGQLGIDGMLITSNTNVRYMTGFTGSAGLAVISGDKAAFITDFRYTEQAKVQVKGFEIIEHGGSLIQTTADTVESFGIKRLGFEQNSMTYGTYASYSAVISDAELVPVAESVEKLRLIKSSEEIKILEEAAKIADDAFRHILTFMKPGISEIAVANELEFYMRSQGADSSSFDMIVASGLRSSLPHGVASDKLIESGDLVTLDFGAYYKGYCSDITRTVAVGQPSDQLKEIYQVVFDAQALGVAHIKPGMTGKEADALTRDHIAAKGYGDYFGHSTGHGLGMEVHESPGLSVRSSAILEPGMVVTVEPGIYIPETGGVRIEDDIVITENGNRTITHSPKELIIL</sequence>
<keyword id="KW-0378">Hydrolase</keyword>
<keyword id="KW-0464">Manganese</keyword>
<keyword id="KW-0479">Metal-binding</keyword>
<keyword id="KW-1185">Reference proteome</keyword>
<reference key="1">
    <citation type="journal article" date="1996" name="Microbiology">
        <title>Systematic sequencing of the 283 kb 210 degrees-232 degrees region of the Bacillus subtilis genome containing the skin element and many sporulation genes.</title>
        <authorList>
            <person name="Mizuno M."/>
            <person name="Masuda S."/>
            <person name="Takemaru K."/>
            <person name="Hosono S."/>
            <person name="Sato T."/>
            <person name="Takeuchi M."/>
            <person name="Kobayashi Y."/>
        </authorList>
    </citation>
    <scope>NUCLEOTIDE SEQUENCE [GENOMIC DNA]</scope>
    <source>
        <strain>168 / JH642</strain>
    </source>
</reference>
<reference key="2">
    <citation type="journal article" date="1997" name="Nature">
        <title>The complete genome sequence of the Gram-positive bacterium Bacillus subtilis.</title>
        <authorList>
            <person name="Kunst F."/>
            <person name="Ogasawara N."/>
            <person name="Moszer I."/>
            <person name="Albertini A.M."/>
            <person name="Alloni G."/>
            <person name="Azevedo V."/>
            <person name="Bertero M.G."/>
            <person name="Bessieres P."/>
            <person name="Bolotin A."/>
            <person name="Borchert S."/>
            <person name="Borriss R."/>
            <person name="Boursier L."/>
            <person name="Brans A."/>
            <person name="Braun M."/>
            <person name="Brignell S.C."/>
            <person name="Bron S."/>
            <person name="Brouillet S."/>
            <person name="Bruschi C.V."/>
            <person name="Caldwell B."/>
            <person name="Capuano V."/>
            <person name="Carter N.M."/>
            <person name="Choi S.-K."/>
            <person name="Codani J.-J."/>
            <person name="Connerton I.F."/>
            <person name="Cummings N.J."/>
            <person name="Daniel R.A."/>
            <person name="Denizot F."/>
            <person name="Devine K.M."/>
            <person name="Duesterhoeft A."/>
            <person name="Ehrlich S.D."/>
            <person name="Emmerson P.T."/>
            <person name="Entian K.-D."/>
            <person name="Errington J."/>
            <person name="Fabret C."/>
            <person name="Ferrari E."/>
            <person name="Foulger D."/>
            <person name="Fritz C."/>
            <person name="Fujita M."/>
            <person name="Fujita Y."/>
            <person name="Fuma S."/>
            <person name="Galizzi A."/>
            <person name="Galleron N."/>
            <person name="Ghim S.-Y."/>
            <person name="Glaser P."/>
            <person name="Goffeau A."/>
            <person name="Golightly E.J."/>
            <person name="Grandi G."/>
            <person name="Guiseppi G."/>
            <person name="Guy B.J."/>
            <person name="Haga K."/>
            <person name="Haiech J."/>
            <person name="Harwood C.R."/>
            <person name="Henaut A."/>
            <person name="Hilbert H."/>
            <person name="Holsappel S."/>
            <person name="Hosono S."/>
            <person name="Hullo M.-F."/>
            <person name="Itaya M."/>
            <person name="Jones L.-M."/>
            <person name="Joris B."/>
            <person name="Karamata D."/>
            <person name="Kasahara Y."/>
            <person name="Klaerr-Blanchard M."/>
            <person name="Klein C."/>
            <person name="Kobayashi Y."/>
            <person name="Koetter P."/>
            <person name="Koningstein G."/>
            <person name="Krogh S."/>
            <person name="Kumano M."/>
            <person name="Kurita K."/>
            <person name="Lapidus A."/>
            <person name="Lardinois S."/>
            <person name="Lauber J."/>
            <person name="Lazarevic V."/>
            <person name="Lee S.-M."/>
            <person name="Levine A."/>
            <person name="Liu H."/>
            <person name="Masuda S."/>
            <person name="Mauel C."/>
            <person name="Medigue C."/>
            <person name="Medina N."/>
            <person name="Mellado R.P."/>
            <person name="Mizuno M."/>
            <person name="Moestl D."/>
            <person name="Nakai S."/>
            <person name="Noback M."/>
            <person name="Noone D."/>
            <person name="O'Reilly M."/>
            <person name="Ogawa K."/>
            <person name="Ogiwara A."/>
            <person name="Oudega B."/>
            <person name="Park S.-H."/>
            <person name="Parro V."/>
            <person name="Pohl T.M."/>
            <person name="Portetelle D."/>
            <person name="Porwollik S."/>
            <person name="Prescott A.M."/>
            <person name="Presecan E."/>
            <person name="Pujic P."/>
            <person name="Purnelle B."/>
            <person name="Rapoport G."/>
            <person name="Rey M."/>
            <person name="Reynolds S."/>
            <person name="Rieger M."/>
            <person name="Rivolta C."/>
            <person name="Rocha E."/>
            <person name="Roche B."/>
            <person name="Rose M."/>
            <person name="Sadaie Y."/>
            <person name="Sato T."/>
            <person name="Scanlan E."/>
            <person name="Schleich S."/>
            <person name="Schroeter R."/>
            <person name="Scoffone F."/>
            <person name="Sekiguchi J."/>
            <person name="Sekowska A."/>
            <person name="Seror S.J."/>
            <person name="Serror P."/>
            <person name="Shin B.-S."/>
            <person name="Soldo B."/>
            <person name="Sorokin A."/>
            <person name="Tacconi E."/>
            <person name="Takagi T."/>
            <person name="Takahashi H."/>
            <person name="Takemaru K."/>
            <person name="Takeuchi M."/>
            <person name="Tamakoshi A."/>
            <person name="Tanaka T."/>
            <person name="Terpstra P."/>
            <person name="Tognoni A."/>
            <person name="Tosato V."/>
            <person name="Uchiyama S."/>
            <person name="Vandenbol M."/>
            <person name="Vannier F."/>
            <person name="Vassarotti A."/>
            <person name="Viari A."/>
            <person name="Wambutt R."/>
            <person name="Wedler E."/>
            <person name="Wedler H."/>
            <person name="Weitzenegger T."/>
            <person name="Winters P."/>
            <person name="Wipat A."/>
            <person name="Yamamoto H."/>
            <person name="Yamane K."/>
            <person name="Yasumoto K."/>
            <person name="Yata K."/>
            <person name="Yoshida K."/>
            <person name="Yoshikawa H.-F."/>
            <person name="Zumstein E."/>
            <person name="Yoshikawa H."/>
            <person name="Danchin A."/>
        </authorList>
    </citation>
    <scope>NUCLEOTIDE SEQUENCE [LARGE SCALE GENOMIC DNA]</scope>
    <source>
        <strain>168</strain>
    </source>
</reference>
<dbReference type="EC" id="3.4.-.-"/>
<dbReference type="EMBL" id="D84432">
    <property type="protein sequence ID" value="BAA12557.1"/>
    <property type="molecule type" value="Genomic_DNA"/>
</dbReference>
<dbReference type="EMBL" id="AL009126">
    <property type="protein sequence ID" value="CAB14377.1"/>
    <property type="molecule type" value="Genomic_DNA"/>
</dbReference>
<dbReference type="PIR" id="C69960">
    <property type="entry name" value="C69960"/>
</dbReference>
<dbReference type="SMR" id="P54518"/>
<dbReference type="FunCoup" id="P54518">
    <property type="interactions" value="661"/>
</dbReference>
<dbReference type="STRING" id="224308.BSU24460"/>
<dbReference type="MEROPS" id="M24.008"/>
<dbReference type="jPOST" id="P54518"/>
<dbReference type="PaxDb" id="224308-BSU24460"/>
<dbReference type="EnsemblBacteria" id="CAB14377">
    <property type="protein sequence ID" value="CAB14377"/>
    <property type="gene ID" value="BSU_24460"/>
</dbReference>
<dbReference type="GeneID" id="938560"/>
<dbReference type="KEGG" id="bsu:BSU24460"/>
<dbReference type="PATRIC" id="fig|224308.179.peg.2664"/>
<dbReference type="eggNOG" id="COG0006">
    <property type="taxonomic scope" value="Bacteria"/>
</dbReference>
<dbReference type="InParanoid" id="P54518"/>
<dbReference type="OrthoDB" id="9806388at2"/>
<dbReference type="PhylomeDB" id="P54518"/>
<dbReference type="BioCyc" id="BSUB:BSU24460-MONOMER"/>
<dbReference type="Proteomes" id="UP000001570">
    <property type="component" value="Chromosome"/>
</dbReference>
<dbReference type="GO" id="GO:0046872">
    <property type="term" value="F:metal ion binding"/>
    <property type="evidence" value="ECO:0007669"/>
    <property type="project" value="UniProtKB-KW"/>
</dbReference>
<dbReference type="GO" id="GO:0070006">
    <property type="term" value="F:metalloaminopeptidase activity"/>
    <property type="evidence" value="ECO:0000318"/>
    <property type="project" value="GO_Central"/>
</dbReference>
<dbReference type="GO" id="GO:0006508">
    <property type="term" value="P:proteolysis"/>
    <property type="evidence" value="ECO:0000318"/>
    <property type="project" value="GO_Central"/>
</dbReference>
<dbReference type="CDD" id="cd01092">
    <property type="entry name" value="APP-like"/>
    <property type="match status" value="1"/>
</dbReference>
<dbReference type="FunFam" id="3.90.230.10:FF:000014">
    <property type="entry name" value="Aminopeptidase P family protein"/>
    <property type="match status" value="1"/>
</dbReference>
<dbReference type="Gene3D" id="3.90.230.10">
    <property type="entry name" value="Creatinase/methionine aminopeptidase superfamily"/>
    <property type="match status" value="1"/>
</dbReference>
<dbReference type="Gene3D" id="3.40.350.10">
    <property type="entry name" value="Creatinase/prolidase N-terminal domain"/>
    <property type="match status" value="1"/>
</dbReference>
<dbReference type="InterPro" id="IPR029149">
    <property type="entry name" value="Creatin/AminoP/Spt16_N"/>
</dbReference>
<dbReference type="InterPro" id="IPR036005">
    <property type="entry name" value="Creatinase/aminopeptidase-like"/>
</dbReference>
<dbReference type="InterPro" id="IPR000587">
    <property type="entry name" value="Creatinase_N"/>
</dbReference>
<dbReference type="InterPro" id="IPR000994">
    <property type="entry name" value="Pept_M24"/>
</dbReference>
<dbReference type="InterPro" id="IPR001714">
    <property type="entry name" value="Pept_M24_MAP"/>
</dbReference>
<dbReference type="InterPro" id="IPR050659">
    <property type="entry name" value="Peptidase_M24B"/>
</dbReference>
<dbReference type="InterPro" id="IPR001131">
    <property type="entry name" value="Peptidase_M24B_aminopep-P_CS"/>
</dbReference>
<dbReference type="PANTHER" id="PTHR46112">
    <property type="entry name" value="AMINOPEPTIDASE"/>
    <property type="match status" value="1"/>
</dbReference>
<dbReference type="PANTHER" id="PTHR46112:SF3">
    <property type="entry name" value="AMINOPEPTIDASE YPDF"/>
    <property type="match status" value="1"/>
</dbReference>
<dbReference type="Pfam" id="PF01321">
    <property type="entry name" value="Creatinase_N"/>
    <property type="match status" value="1"/>
</dbReference>
<dbReference type="Pfam" id="PF00557">
    <property type="entry name" value="Peptidase_M24"/>
    <property type="match status" value="1"/>
</dbReference>
<dbReference type="PRINTS" id="PR00599">
    <property type="entry name" value="MAPEPTIDASE"/>
</dbReference>
<dbReference type="SUPFAM" id="SSF55920">
    <property type="entry name" value="Creatinase/aminopeptidase"/>
    <property type="match status" value="1"/>
</dbReference>
<dbReference type="SUPFAM" id="SSF53092">
    <property type="entry name" value="Creatinase/prolidase N-terminal domain"/>
    <property type="match status" value="1"/>
</dbReference>
<dbReference type="PROSITE" id="PS00491">
    <property type="entry name" value="PROLINE_PEPTIDASE"/>
    <property type="match status" value="1"/>
</dbReference>